<protein>
    <recommendedName>
        <fullName>Protein O-linked-mannose beta-1,2-N-acetylglucosaminyltransferase 1</fullName>
        <shortName>POMGnT1</shortName>
        <ecNumber evidence="1">2.4.1.-</ecNumber>
    </recommendedName>
</protein>
<organism>
    <name type="scientific">Rattus norvegicus</name>
    <name type="common">Rat</name>
    <dbReference type="NCBI Taxonomy" id="10116"/>
    <lineage>
        <taxon>Eukaryota</taxon>
        <taxon>Metazoa</taxon>
        <taxon>Chordata</taxon>
        <taxon>Craniata</taxon>
        <taxon>Vertebrata</taxon>
        <taxon>Euteleostomi</taxon>
        <taxon>Mammalia</taxon>
        <taxon>Eutheria</taxon>
        <taxon>Euarchontoglires</taxon>
        <taxon>Glires</taxon>
        <taxon>Rodentia</taxon>
        <taxon>Myomorpha</taxon>
        <taxon>Muroidea</taxon>
        <taxon>Muridae</taxon>
        <taxon>Murinae</taxon>
        <taxon>Rattus</taxon>
    </lineage>
</organism>
<comment type="function">
    <text evidence="1">Participates in O-mannosyl glycosylation by catalyzing the addition of N-acetylglucosamine to O-linked mannose on glycoproteins. Catalyzes the synthesis of the GlcNAc(beta1-2)Man(alpha1-)O-Ser/Thr moiety on alpha-dystroglycan and other O-mannosylated proteins, providing the necessary basis for the addition of further carbohydrate moieties. Is specific for alpha linked terminal mannose.</text>
</comment>
<comment type="catalytic activity">
    <reaction evidence="1">
        <text>3-O-(alpha-D-mannosyl)-L-threonyl-[protein] + UDP-N-acetyl-alpha-D-glucosamine = 3-O-(N-acetyl-beta-D-glucosaminyl-(1-&gt;2)-alpha-D-mannosyl)-L-threonyl-[protein] + UDP + H(+)</text>
        <dbReference type="Rhea" id="RHEA:54128"/>
        <dbReference type="Rhea" id="RHEA-COMP:13547"/>
        <dbReference type="Rhea" id="RHEA-COMP:13802"/>
        <dbReference type="ChEBI" id="CHEBI:15378"/>
        <dbReference type="ChEBI" id="CHEBI:57705"/>
        <dbReference type="ChEBI" id="CHEBI:58223"/>
        <dbReference type="ChEBI" id="CHEBI:137323"/>
        <dbReference type="ChEBI" id="CHEBI:138067"/>
    </reaction>
</comment>
<comment type="cofactor">
    <cofactor evidence="1">
        <name>Mn(2+)</name>
        <dbReference type="ChEBI" id="CHEBI:29035"/>
    </cofactor>
    <text evidence="1">The manganese ion interacts primarily with the substrate UDP-N-acetylglucosamine.</text>
</comment>
<comment type="pathway">
    <text evidence="1">Protein modification; protein glycosylation.</text>
</comment>
<comment type="subunit">
    <text evidence="1">Interacts with DAG1 (via O-linked mannose moiety). Interacts (via transmembrane domain) with FKTN; the interaction is direct and is required for normal location in Golgi membranes.</text>
</comment>
<comment type="subcellular location">
    <subcellularLocation>
        <location evidence="1">Golgi apparatus membrane</location>
        <topology evidence="1">Single-pass type II membrane protein</topology>
    </subcellularLocation>
</comment>
<comment type="domain">
    <text evidence="1">The GG-type lectin domain is known as the stem domain in POMGnT1. It mediates specific interaction with beta-linked N-acetylglucosamine moieties of O-glycosylated proteins. It also interacts with its product, N-acetyl-beta-D-glucosaminyl-(1-&gt;2)-O-alpha-D-mannosylprotein.</text>
</comment>
<comment type="similarity">
    <text evidence="5">Belongs to the glycosyltransferase 13 family.</text>
</comment>
<evidence type="ECO:0000250" key="1">
    <source>
        <dbReference type="UniProtKB" id="Q8WZA1"/>
    </source>
</evidence>
<evidence type="ECO:0000255" key="2"/>
<evidence type="ECO:0000255" key="3">
    <source>
        <dbReference type="PROSITE-ProRule" id="PRU01375"/>
    </source>
</evidence>
<evidence type="ECO:0000256" key="4">
    <source>
        <dbReference type="SAM" id="MobiDB-lite"/>
    </source>
</evidence>
<evidence type="ECO:0000305" key="5"/>
<name>PMGT1_RAT</name>
<dbReference type="EC" id="2.4.1.-" evidence="1"/>
<dbReference type="EMBL" id="BC083641">
    <property type="protein sequence ID" value="AAH83641.1"/>
    <property type="molecule type" value="mRNA"/>
</dbReference>
<dbReference type="RefSeq" id="NP_001007748.1">
    <property type="nucleotide sequence ID" value="NM_001007747.1"/>
</dbReference>
<dbReference type="RefSeq" id="XP_063144049.1">
    <property type="nucleotide sequence ID" value="XM_063287979.1"/>
</dbReference>
<dbReference type="SMR" id="Q5XIN7"/>
<dbReference type="FunCoup" id="Q5XIN7">
    <property type="interactions" value="481"/>
</dbReference>
<dbReference type="STRING" id="10116.ENSRNOP00000035825"/>
<dbReference type="CAZy" id="GT13">
    <property type="family name" value="Glycosyltransferase Family 13"/>
</dbReference>
<dbReference type="GlyGen" id="Q5XIN7">
    <property type="glycosylation" value="1 site"/>
</dbReference>
<dbReference type="PhosphoSitePlus" id="Q5XIN7"/>
<dbReference type="PaxDb" id="10116-ENSRNOP00000035825"/>
<dbReference type="GeneID" id="362567"/>
<dbReference type="KEGG" id="rno:362567"/>
<dbReference type="UCSC" id="RGD:1359396">
    <property type="organism name" value="rat"/>
</dbReference>
<dbReference type="AGR" id="RGD:1359396"/>
<dbReference type="CTD" id="55624"/>
<dbReference type="RGD" id="1359396">
    <property type="gene designation" value="Pomgnt1"/>
</dbReference>
<dbReference type="VEuPathDB" id="HostDB:ENSRNOG00000023455"/>
<dbReference type="eggNOG" id="ENOG502QSG3">
    <property type="taxonomic scope" value="Eukaryota"/>
</dbReference>
<dbReference type="HOGENOM" id="CLU_024847_0_0_1"/>
<dbReference type="InParanoid" id="Q5XIN7"/>
<dbReference type="OrthoDB" id="440755at2759"/>
<dbReference type="PhylomeDB" id="Q5XIN7"/>
<dbReference type="TreeFam" id="TF320555"/>
<dbReference type="Reactome" id="R-RNO-5173105">
    <property type="pathway name" value="O-linked glycosylation"/>
</dbReference>
<dbReference type="UniPathway" id="UPA00378"/>
<dbReference type="PRO" id="PR:Q5XIN7"/>
<dbReference type="Proteomes" id="UP000002494">
    <property type="component" value="Chromosome 5"/>
</dbReference>
<dbReference type="Bgee" id="ENSRNOG00000023455">
    <property type="expression patterns" value="Expressed in pancreas and 20 other cell types or tissues"/>
</dbReference>
<dbReference type="GO" id="GO:0000139">
    <property type="term" value="C:Golgi membrane"/>
    <property type="evidence" value="ECO:0000250"/>
    <property type="project" value="UniProtKB"/>
</dbReference>
<dbReference type="GO" id="GO:0016020">
    <property type="term" value="C:membrane"/>
    <property type="evidence" value="ECO:0000250"/>
    <property type="project" value="UniProtKB"/>
</dbReference>
<dbReference type="GO" id="GO:0008375">
    <property type="term" value="F:acetylglucosaminyltransferase activity"/>
    <property type="evidence" value="ECO:0000250"/>
    <property type="project" value="UniProtKB"/>
</dbReference>
<dbReference type="GO" id="GO:0047223">
    <property type="term" value="F:beta-1,3-galactosyl-O-glycosyl-glycoprotein beta-1,3-N-acetylglucosaminyltransferase activity"/>
    <property type="evidence" value="ECO:0000266"/>
    <property type="project" value="RGD"/>
</dbReference>
<dbReference type="GO" id="GO:0030246">
    <property type="term" value="F:carbohydrate binding"/>
    <property type="evidence" value="ECO:0007669"/>
    <property type="project" value="UniProtKB-KW"/>
</dbReference>
<dbReference type="GO" id="GO:0030145">
    <property type="term" value="F:manganese ion binding"/>
    <property type="evidence" value="ECO:0000250"/>
    <property type="project" value="UniProtKB"/>
</dbReference>
<dbReference type="GO" id="GO:0071711">
    <property type="term" value="P:basement membrane organization"/>
    <property type="evidence" value="ECO:0000266"/>
    <property type="project" value="RGD"/>
</dbReference>
<dbReference type="GO" id="GO:0007420">
    <property type="term" value="P:brain development"/>
    <property type="evidence" value="ECO:0000266"/>
    <property type="project" value="RGD"/>
</dbReference>
<dbReference type="GO" id="GO:0021542">
    <property type="term" value="P:dentate gyrus development"/>
    <property type="evidence" value="ECO:0000266"/>
    <property type="project" value="RGD"/>
</dbReference>
<dbReference type="GO" id="GO:0010467">
    <property type="term" value="P:gene expression"/>
    <property type="evidence" value="ECO:0000266"/>
    <property type="project" value="RGD"/>
</dbReference>
<dbReference type="GO" id="GO:0051674">
    <property type="term" value="P:localization of cell"/>
    <property type="evidence" value="ECO:0000266"/>
    <property type="project" value="RGD"/>
</dbReference>
<dbReference type="GO" id="GO:0042552">
    <property type="term" value="P:myelination"/>
    <property type="evidence" value="ECO:0000266"/>
    <property type="project" value="RGD"/>
</dbReference>
<dbReference type="GO" id="GO:0016266">
    <property type="term" value="P:O-glycan processing"/>
    <property type="evidence" value="ECO:0000250"/>
    <property type="project" value="UniProtKB"/>
</dbReference>
<dbReference type="GO" id="GO:0006486">
    <property type="term" value="P:protein glycosylation"/>
    <property type="evidence" value="ECO:0000266"/>
    <property type="project" value="RGD"/>
</dbReference>
<dbReference type="GO" id="GO:0036211">
    <property type="term" value="P:protein modification process"/>
    <property type="evidence" value="ECO:0000266"/>
    <property type="project" value="RGD"/>
</dbReference>
<dbReference type="GO" id="GO:0006493">
    <property type="term" value="P:protein O-linked glycosylation"/>
    <property type="evidence" value="ECO:0000250"/>
    <property type="project" value="UniProtKB"/>
</dbReference>
<dbReference type="GO" id="GO:0035269">
    <property type="term" value="P:protein O-linked mannosylation"/>
    <property type="evidence" value="ECO:0000266"/>
    <property type="project" value="RGD"/>
</dbReference>
<dbReference type="GO" id="GO:0150103">
    <property type="term" value="P:reactive gliosis"/>
    <property type="evidence" value="ECO:0000266"/>
    <property type="project" value="RGD"/>
</dbReference>
<dbReference type="GO" id="GO:0007605">
    <property type="term" value="P:sensory perception of sound"/>
    <property type="evidence" value="ECO:0000266"/>
    <property type="project" value="RGD"/>
</dbReference>
<dbReference type="CDD" id="cd02514">
    <property type="entry name" value="GT13_GLCNAC-TI"/>
    <property type="match status" value="1"/>
</dbReference>
<dbReference type="CDD" id="cd13937">
    <property type="entry name" value="PANDER_GnT-1_2_like"/>
    <property type="match status" value="1"/>
</dbReference>
<dbReference type="FunFam" id="3.90.550.10:FF:000038">
    <property type="entry name" value="protein O-linked-mannose beta-1,2-N-acetylglucosaminyltransferase 1 isoform X1"/>
    <property type="match status" value="1"/>
</dbReference>
<dbReference type="Gene3D" id="3.90.550.10">
    <property type="entry name" value="Spore Coat Polysaccharide Biosynthesis Protein SpsA, Chain A"/>
    <property type="match status" value="1"/>
</dbReference>
<dbReference type="InterPro" id="IPR004139">
    <property type="entry name" value="Glyco_trans_13"/>
</dbReference>
<dbReference type="InterPro" id="IPR039477">
    <property type="entry name" value="ILEI/PANDER_dom"/>
</dbReference>
<dbReference type="InterPro" id="IPR029044">
    <property type="entry name" value="Nucleotide-diphossugar_trans"/>
</dbReference>
<dbReference type="InterPro" id="IPR052463">
    <property type="entry name" value="O-linked_mannose_GnT"/>
</dbReference>
<dbReference type="InterPro" id="IPR039474">
    <property type="entry name" value="POMGNT1_PANDER-like"/>
</dbReference>
<dbReference type="PANTHER" id="PTHR46396">
    <property type="entry name" value="PROTEIN O-LINKED-MANNOSE BETA-1,2-N-ACETYLGLUCOSAMINYLTRANSFERASE 1"/>
    <property type="match status" value="1"/>
</dbReference>
<dbReference type="PANTHER" id="PTHR46396:SF1">
    <property type="entry name" value="PROTEIN O-LINKED-MANNOSE BETA-1,2-N-ACETYLGLUCOSAMINYLTRANSFERASE 1"/>
    <property type="match status" value="1"/>
</dbReference>
<dbReference type="Pfam" id="PF03071">
    <property type="entry name" value="GNT-I"/>
    <property type="match status" value="1"/>
</dbReference>
<dbReference type="Pfam" id="PF15711">
    <property type="entry name" value="ILEI"/>
    <property type="match status" value="1"/>
</dbReference>
<dbReference type="SUPFAM" id="SSF53448">
    <property type="entry name" value="Nucleotide-diphospho-sugar transferases"/>
    <property type="match status" value="1"/>
</dbReference>
<dbReference type="PROSITE" id="PS52031">
    <property type="entry name" value="GG_LECTIN"/>
    <property type="match status" value="1"/>
</dbReference>
<reference key="1">
    <citation type="journal article" date="2004" name="Genome Res.">
        <title>The status, quality, and expansion of the NIH full-length cDNA project: the Mammalian Gene Collection (MGC).</title>
        <authorList>
            <consortium name="The MGC Project Team"/>
        </authorList>
    </citation>
    <scope>NUCLEOTIDE SEQUENCE [LARGE SCALE MRNA]</scope>
    <source>
        <tissue>Testis</tissue>
    </source>
</reference>
<gene>
    <name type="primary">Pomgnt1</name>
</gene>
<feature type="chain" id="PRO_0000191393" description="Protein O-linked-mannose beta-1,2-N-acetylglucosaminyltransferase 1">
    <location>
        <begin position="1"/>
        <end position="660"/>
    </location>
</feature>
<feature type="topological domain" description="Cytoplasmic" evidence="2">
    <location>
        <begin position="1"/>
        <end position="37"/>
    </location>
</feature>
<feature type="transmembrane region" description="Helical; Signal-anchor for type II membrane protein" evidence="2">
    <location>
        <begin position="38"/>
        <end position="58"/>
    </location>
</feature>
<feature type="topological domain" description="Lumenal" evidence="2">
    <location>
        <begin position="59"/>
        <end position="660"/>
    </location>
</feature>
<feature type="domain" description="GG-type lectin" evidence="3">
    <location>
        <begin position="97"/>
        <end position="258"/>
    </location>
</feature>
<feature type="region of interest" description="Catalytic" evidence="1">
    <location>
        <begin position="300"/>
        <end position="646"/>
    </location>
</feature>
<feature type="region of interest" description="Interaction with O-glycosylated substrate glycoprotein" evidence="1">
    <location>
        <begin position="473"/>
        <end position="481"/>
    </location>
</feature>
<feature type="region of interest" description="Interaction with O-glycosylated substrate glycoprotein" evidence="1">
    <location>
        <begin position="506"/>
        <end position="512"/>
    </location>
</feature>
<feature type="region of interest" description="Interaction with O-glycosylated substrate glycoprotein" evidence="1">
    <location>
        <begin position="600"/>
        <end position="605"/>
    </location>
</feature>
<feature type="region of interest" description="Disordered" evidence="4">
    <location>
        <begin position="634"/>
        <end position="660"/>
    </location>
</feature>
<feature type="binding site" evidence="1">
    <location>
        <position position="129"/>
    </location>
    <ligand>
        <name>a carbohydrate</name>
        <dbReference type="ChEBI" id="CHEBI:16646"/>
    </ligand>
</feature>
<feature type="binding site" evidence="1">
    <location>
        <position position="179"/>
    </location>
    <ligand>
        <name>a carbohydrate</name>
        <dbReference type="ChEBI" id="CHEBI:16646"/>
    </ligand>
</feature>
<feature type="binding site" evidence="1">
    <location>
        <position position="207"/>
    </location>
    <ligand>
        <name>a carbohydrate</name>
        <dbReference type="ChEBI" id="CHEBI:16646"/>
    </ligand>
</feature>
<feature type="binding site" evidence="1">
    <location>
        <begin position="307"/>
        <end position="311"/>
    </location>
    <ligand>
        <name>UDP-N-acetyl-alpha-D-glucosamine</name>
        <dbReference type="ChEBI" id="CHEBI:57705"/>
    </ligand>
</feature>
<feature type="binding site" evidence="1">
    <location>
        <position position="338"/>
    </location>
    <ligand>
        <name>UDP-N-acetyl-alpha-D-glucosamine</name>
        <dbReference type="ChEBI" id="CHEBI:57705"/>
    </ligand>
</feature>
<feature type="binding site" evidence="1">
    <location>
        <position position="371"/>
    </location>
    <ligand>
        <name>UDP-N-acetyl-alpha-D-glucosamine</name>
        <dbReference type="ChEBI" id="CHEBI:57705"/>
    </ligand>
</feature>
<feature type="binding site" evidence="1">
    <location>
        <begin position="394"/>
        <end position="395"/>
    </location>
    <ligand>
        <name>UDP-N-acetyl-alpha-D-glucosamine</name>
        <dbReference type="ChEBI" id="CHEBI:57705"/>
    </ligand>
</feature>
<feature type="binding site" evidence="1">
    <location>
        <position position="395"/>
    </location>
    <ligand>
        <name>Mn(2+)</name>
        <dbReference type="ChEBI" id="CHEBI:29035"/>
    </ligand>
</feature>
<feature type="binding site" evidence="1">
    <location>
        <position position="500"/>
    </location>
    <ligand>
        <name>Mn(2+)</name>
        <dbReference type="ChEBI" id="CHEBI:29035"/>
    </ligand>
</feature>
<feature type="binding site" evidence="1">
    <location>
        <begin position="506"/>
        <end position="507"/>
    </location>
    <ligand>
        <name>UDP-N-acetyl-alpha-D-glucosamine</name>
        <dbReference type="ChEBI" id="CHEBI:57705"/>
    </ligand>
</feature>
<feature type="modified residue" description="Phosphoserine" evidence="1">
    <location>
        <position position="7"/>
    </location>
</feature>
<feature type="disulfide bond" evidence="1">
    <location>
        <begin position="254"/>
        <end position="281"/>
    </location>
</feature>
<feature type="disulfide bond" evidence="1">
    <location>
        <begin position="269"/>
        <end position="279"/>
    </location>
</feature>
<feature type="disulfide bond" evidence="1">
    <location>
        <begin position="421"/>
        <end position="490"/>
    </location>
</feature>
<feature type="disulfide bond" evidence="1">
    <location>
        <begin position="562"/>
        <end position="596"/>
    </location>
</feature>
<keyword id="KW-1015">Disulfide bond</keyword>
<keyword id="KW-0328">Glycosyltransferase</keyword>
<keyword id="KW-0333">Golgi apparatus</keyword>
<keyword id="KW-0430">Lectin</keyword>
<keyword id="KW-0464">Manganese</keyword>
<keyword id="KW-0472">Membrane</keyword>
<keyword id="KW-0479">Metal-binding</keyword>
<keyword id="KW-0597">Phosphoprotein</keyword>
<keyword id="KW-1185">Reference proteome</keyword>
<keyword id="KW-0735">Signal-anchor</keyword>
<keyword id="KW-0808">Transferase</keyword>
<keyword id="KW-0812">Transmembrane</keyword>
<keyword id="KW-1133">Transmembrane helix</keyword>
<proteinExistence type="evidence at transcript level"/>
<accession>Q5XIN7</accession>
<sequence>MDDWKPSPLIKPFGARKKRSWYLTWKYKLTNQRALRRFCQTGAVLFLLVTVIVNIKLILDTRRAISEANEDPEPEQDYDEALGRLESPRHRGSSPRRVLDVEVYSSRSKVYVAVDGTTVLEDEAREQGRGIHVIVLNQATGHVMAKRVFDTYSPHEDEAMVLFLNMVAPGRVLICTVKDEGSFHLKDTAKALLRSLGSQAGPALGWRDTWAFVGRKGGPVLGEKHSKSPALSSWGDPVLLKTDVPLSSAEEAECHWADTELNRRRRRFCSKVEGYGSVCSCKDPTPIEFSPDPLPDNKVLNVPVAVIAGNRPNYLYRMLRSLLSAQGVSPQMITVFIDGYYEEPMDVVALFGLRGIQHTPISIKNARVSQHYKASLTATFNLFPEAKFAVVLEEDLDIAVDFFSFLSQSIHLLEEDDSLYCISAWNDQGYEHTAEDPALLYRVETMPGLGWVLRKSLYKEELEPKWPTPEKLWDWDMWMRMPEQRRGRECIIPDVSRSYHFGIVGLNMNGYFHEAYFKKHKFNTVPGVQLRNVDSLKKEAYEVEIHRLLSEAEVLDHSKDPCEDSFLPDTEGHTYVAFIRMEKDDDFTTWTQLAKCLHIWDLDVRGNHRGLWRLFRKKNHFLVVGVPASPYSVKKPPSVTPIFLEPPPKEEGAPGAAEQT</sequence>